<evidence type="ECO:0000250" key="1">
    <source>
        <dbReference type="UniProtKB" id="Q9UHN6"/>
    </source>
</evidence>
<evidence type="ECO:0000255" key="2"/>
<evidence type="ECO:0000255" key="3">
    <source>
        <dbReference type="PROSITE-ProRule" id="PRU00498"/>
    </source>
</evidence>
<evidence type="ECO:0000255" key="4">
    <source>
        <dbReference type="PROSITE-ProRule" id="PRU00817"/>
    </source>
</evidence>
<evidence type="ECO:0000255" key="5">
    <source>
        <dbReference type="PROSITE-ProRule" id="PRU01375"/>
    </source>
</evidence>
<evidence type="ECO:0000256" key="6">
    <source>
        <dbReference type="SAM" id="MobiDB-lite"/>
    </source>
</evidence>
<evidence type="ECO:0000269" key="7">
    <source>
    </source>
</evidence>
<evidence type="ECO:0000269" key="8">
    <source>
    </source>
</evidence>
<evidence type="ECO:0000269" key="9">
    <source>
    </source>
</evidence>
<evidence type="ECO:0000269" key="10">
    <source>
    </source>
</evidence>
<evidence type="ECO:0000303" key="11">
    <source>
    </source>
</evidence>
<evidence type="ECO:0000303" key="12">
    <source>
    </source>
</evidence>
<evidence type="ECO:0000303" key="13">
    <source>
    </source>
</evidence>
<evidence type="ECO:0000305" key="14"/>
<evidence type="ECO:0000305" key="15">
    <source>
    </source>
</evidence>
<dbReference type="EC" id="3.2.1.35" evidence="15"/>
<dbReference type="EMBL" id="BX294191">
    <property type="protein sequence ID" value="CAM56649.1"/>
    <property type="molecule type" value="Genomic_DNA"/>
</dbReference>
<dbReference type="RefSeq" id="NP_001092919.1">
    <property type="nucleotide sequence ID" value="NM_001099449.1"/>
</dbReference>
<dbReference type="SMR" id="A3KPQ7"/>
<dbReference type="FunCoup" id="A3KPQ7">
    <property type="interactions" value="421"/>
</dbReference>
<dbReference type="STRING" id="7955.ENSDARP00000118976"/>
<dbReference type="GlyCosmos" id="A3KPQ7">
    <property type="glycosylation" value="13 sites, No reported glycans"/>
</dbReference>
<dbReference type="PaxDb" id="7955-ENSDARP00000082444"/>
<dbReference type="PeptideAtlas" id="A3KPQ7"/>
<dbReference type="Ensembl" id="ENSDART00000133217">
    <property type="protein sequence ID" value="ENSDARP00000118976"/>
    <property type="gene ID" value="ENSDARG00000061600"/>
</dbReference>
<dbReference type="GeneID" id="566851"/>
<dbReference type="KEGG" id="dre:566851"/>
<dbReference type="AGR" id="ZFIN:ZDB-GENE-030131-2179"/>
<dbReference type="CTD" id="23670"/>
<dbReference type="ZFIN" id="ZDB-GENE-030131-2179">
    <property type="gene designation" value="cemip2"/>
</dbReference>
<dbReference type="eggNOG" id="ENOG502QUM7">
    <property type="taxonomic scope" value="Eukaryota"/>
</dbReference>
<dbReference type="InParanoid" id="A3KPQ7"/>
<dbReference type="OrthoDB" id="120976at2759"/>
<dbReference type="PhylomeDB" id="A3KPQ7"/>
<dbReference type="PRO" id="PR:A3KPQ7"/>
<dbReference type="Proteomes" id="UP000000437">
    <property type="component" value="Chromosome 5"/>
</dbReference>
<dbReference type="Bgee" id="ENSDARG00000061600">
    <property type="expression patterns" value="Expressed in muscle tissue and 39 other cell types or tissues"/>
</dbReference>
<dbReference type="ExpressionAtlas" id="A3KPQ7">
    <property type="expression patterns" value="baseline and differential"/>
</dbReference>
<dbReference type="GO" id="GO:0005886">
    <property type="term" value="C:plasma membrane"/>
    <property type="evidence" value="ECO:0000314"/>
    <property type="project" value="UniProtKB"/>
</dbReference>
<dbReference type="GO" id="GO:0005509">
    <property type="term" value="F:calcium ion binding"/>
    <property type="evidence" value="ECO:0000250"/>
    <property type="project" value="UniProtKB"/>
</dbReference>
<dbReference type="GO" id="GO:0030246">
    <property type="term" value="F:carbohydrate binding"/>
    <property type="evidence" value="ECO:0007669"/>
    <property type="project" value="UniProtKB-KW"/>
</dbReference>
<dbReference type="GO" id="GO:0004415">
    <property type="term" value="F:hyalurononglucosaminidase activity"/>
    <property type="evidence" value="ECO:0000314"/>
    <property type="project" value="UniProtKB"/>
</dbReference>
<dbReference type="GO" id="GO:0001525">
    <property type="term" value="P:angiogenesis"/>
    <property type="evidence" value="ECO:0007669"/>
    <property type="project" value="UniProtKB-KW"/>
</dbReference>
<dbReference type="GO" id="GO:0003190">
    <property type="term" value="P:atrioventricular valve formation"/>
    <property type="evidence" value="ECO:0000315"/>
    <property type="project" value="UniProtKB"/>
</dbReference>
<dbReference type="GO" id="GO:0055008">
    <property type="term" value="P:cardiac muscle tissue morphogenesis"/>
    <property type="evidence" value="ECO:0000315"/>
    <property type="project" value="ZFIN"/>
</dbReference>
<dbReference type="GO" id="GO:0060974">
    <property type="term" value="P:cell migration involved in heart formation"/>
    <property type="evidence" value="ECO:0000315"/>
    <property type="project" value="ZFIN"/>
</dbReference>
<dbReference type="GO" id="GO:0003318">
    <property type="term" value="P:cell migration to the midline involved in heart development"/>
    <property type="evidence" value="ECO:0000315"/>
    <property type="project" value="UniProtKB"/>
</dbReference>
<dbReference type="GO" id="GO:0003143">
    <property type="term" value="P:embryonic heart tube morphogenesis"/>
    <property type="evidence" value="ECO:0000315"/>
    <property type="project" value="ZFIN"/>
</dbReference>
<dbReference type="GO" id="GO:0003197">
    <property type="term" value="P:endocardial cushion development"/>
    <property type="evidence" value="ECO:0000315"/>
    <property type="project" value="ZFIN"/>
</dbReference>
<dbReference type="GO" id="GO:0001947">
    <property type="term" value="P:heart looping"/>
    <property type="evidence" value="ECO:0000315"/>
    <property type="project" value="UniProtKB"/>
</dbReference>
<dbReference type="GO" id="GO:0030214">
    <property type="term" value="P:hyaluronan catabolic process"/>
    <property type="evidence" value="ECO:0000314"/>
    <property type="project" value="UniProtKB"/>
</dbReference>
<dbReference type="GO" id="GO:0016203">
    <property type="term" value="P:muscle attachment"/>
    <property type="evidence" value="ECO:0000315"/>
    <property type="project" value="ZFIN"/>
</dbReference>
<dbReference type="GO" id="GO:0060415">
    <property type="term" value="P:muscle tissue morphogenesis"/>
    <property type="evidence" value="ECO:0000315"/>
    <property type="project" value="ZFIN"/>
</dbReference>
<dbReference type="GO" id="GO:1901203">
    <property type="term" value="P:positive regulation of extracellular matrix assembly"/>
    <property type="evidence" value="ECO:0000315"/>
    <property type="project" value="ZFIN"/>
</dbReference>
<dbReference type="GO" id="GO:1900748">
    <property type="term" value="P:positive regulation of vascular endothelial growth factor signaling pathway"/>
    <property type="evidence" value="ECO:0000314"/>
    <property type="project" value="UniProtKB"/>
</dbReference>
<dbReference type="GO" id="GO:1903670">
    <property type="term" value="P:regulation of sprouting angiogenesis"/>
    <property type="evidence" value="ECO:0000315"/>
    <property type="project" value="UniProtKB"/>
</dbReference>
<dbReference type="GO" id="GO:0030111">
    <property type="term" value="P:regulation of Wnt signaling pathway"/>
    <property type="evidence" value="ECO:0000315"/>
    <property type="project" value="ZFIN"/>
</dbReference>
<dbReference type="CDD" id="cd13938">
    <property type="entry name" value="PANDER_like_TMEM2"/>
    <property type="match status" value="1"/>
</dbReference>
<dbReference type="InterPro" id="IPR052252">
    <property type="entry name" value="CEMIP/CEMIP2"/>
</dbReference>
<dbReference type="InterPro" id="IPR055401">
    <property type="entry name" value="CEMIP_beta-hel_dom"/>
</dbReference>
<dbReference type="InterPro" id="IPR055400">
    <property type="entry name" value="CEMIP_X"/>
</dbReference>
<dbReference type="InterPro" id="IPR019316">
    <property type="entry name" value="G8_domain"/>
</dbReference>
<dbReference type="InterPro" id="IPR039477">
    <property type="entry name" value="ILEI/PANDER_dom"/>
</dbReference>
<dbReference type="InterPro" id="IPR011050">
    <property type="entry name" value="Pectin_lyase_fold/virulence"/>
</dbReference>
<dbReference type="InterPro" id="IPR039473">
    <property type="entry name" value="TMEM2_PANDER-like"/>
</dbReference>
<dbReference type="PANTHER" id="PTHR15535:SF26">
    <property type="entry name" value="CELL SURFACE HYALURONIDASE"/>
    <property type="match status" value="1"/>
</dbReference>
<dbReference type="PANTHER" id="PTHR15535">
    <property type="entry name" value="TRANSMEMBRANE PROTEIN 2-RELATED"/>
    <property type="match status" value="1"/>
</dbReference>
<dbReference type="Pfam" id="PF24606">
    <property type="entry name" value="CEMIP_beta-hel"/>
    <property type="match status" value="1"/>
</dbReference>
<dbReference type="Pfam" id="PF24605">
    <property type="entry name" value="CEMIP_X"/>
    <property type="match status" value="1"/>
</dbReference>
<dbReference type="Pfam" id="PF10162">
    <property type="entry name" value="G8"/>
    <property type="match status" value="1"/>
</dbReference>
<dbReference type="Pfam" id="PF15711">
    <property type="entry name" value="ILEI"/>
    <property type="match status" value="2"/>
</dbReference>
<dbReference type="SMART" id="SM01225">
    <property type="entry name" value="G8"/>
    <property type="match status" value="1"/>
</dbReference>
<dbReference type="SUPFAM" id="SSF51126">
    <property type="entry name" value="Pectin lyase-like"/>
    <property type="match status" value="1"/>
</dbReference>
<dbReference type="PROSITE" id="PS51484">
    <property type="entry name" value="G8"/>
    <property type="match status" value="1"/>
</dbReference>
<dbReference type="PROSITE" id="PS52031">
    <property type="entry name" value="GG_LECTIN"/>
    <property type="match status" value="2"/>
</dbReference>
<sequence length="1378" mass="152328">MQVNDGPSSHPIFVAPVNGNAQRSSGYVPGRIVPVRSPPPAKAPPPPPLKPPVPPPARPSVFNLSEDGNRREQAQNQQRKNTYICVGIFFGIFLLILILVLSLTSKDVLDENCPHQNPALRSWKPGHDLKKVVVIHSGEHYRLDSSATLYSITIQAGGSVVFADDKKGSKNITLRTRHILIEDGGALHIGAPKCRYRSLATITLVGRSDETAVTEVPGMGRKFLGVNSGGTLELHGSERMSWTFLTRTVPASGLATGDHAFQKNFSRGINLRVVDQDTAEVLVNERFDTHESQDDSKRLGELLKALPAGRIVALATGDSAVKNLVFETKQTIHDLLGSNYISDLKYRDAWALVSVIGGGNGSCTEDVREHENHDTGGKALARQDFFTVDGVGFTVTAYSEWSNGYPTTGFQVDAVDKVVLNLQDDVSSWNPGDRIVVASTDYSMYQAEEFTLLPCPNCNRKQVQIQGKPQFSHVGEILDGVDMRAEVALLSRNILIHGEMENSCYGGNWCQYFSYDTFGGHIKILGNFTSVHLSHIELKHMGQQREKGRYPLNFHRCGDVDQSGGYSNPAYVDSLSIHHSFSRCVTVHATNGLLVKDTVGYDTLGHCFFLKDGIEQRNIFFHNLGLLTRPGTILPTDRNDSMCTEITDRVYKGYIPIPANECKAVSSFWIAHPNNHLISNSAAGSQDAGIWYVFHNSSTGDSHGMISETKAELTPLGTFFNNRVHSNFKAGLFIDRKVKSTNATAADPREYLCLDNSARFRPHESSDPSRPRVAAIIDTLISFKNNDLGAWIRGGDIIIRNSGDGSYPKDEGSSQEVSQSLFIGESRNRGTNGGQNKYWGIGGVDGKMRTLPRNKTFPIRGFQINDGPVRIFDSTFRAFSPTADRFTMAVGFSLKNIWQLTPRNNLSALAFHPSVTLRAFFGRPGDWFEQNDLDGDKNSIFHDLDGSISGYADTYVARADNFLIRHPQCVDMPQWNGVVCSGKYSQVYIQTQAASNLSLSISRDEYPDKPMVLRGIRTKTSPSQQYQPVLMMGKSYTMHWNGPAPRETVLSLINFDQDDWALLGLCYPNETVFQITSDIYNKQNNGFEGIEDYGPVTSIADLEKRQQERKYFFDKSAGLLWLYARARHRRDGNSYCSSAGCERVKIIATIRANQKTETCNCTANAYPKYSKPASNIVPMPKPNTEPCGACGASQFAFSSDPWNSYLQTQIKSLSVKEEQDNDTQAYITVNAQRFDLSQSGFLLVTVDACSGKVTKNSMFSSLDTKMEQFFKTGIMKRSIVLLATRGQPASFAGVAQYLESLGSAKTPDLQNKVAIAFFGFLGQGGPSPQPWSTLLTCQGAKILGLQERFIPLSLEEYSCPPKKDSPTRMDLELLKKIS</sequence>
<proteinExistence type="evidence at protein level"/>
<gene>
    <name type="primary">cemip2</name>
    <name evidence="12" type="synonym">frv</name>
    <name evidence="11 12" type="synonym">tmem2</name>
    <name evidence="11" type="synonym">wkm</name>
    <name evidence="13" type="ORF">si:dkey-24k20.1</name>
</gene>
<feature type="chain" id="PRO_0000289974" description="Cell surface hyaluronidase">
    <location>
        <begin position="1"/>
        <end position="1378"/>
    </location>
</feature>
<feature type="topological domain" description="Cytoplasmic" evidence="10">
    <location>
        <begin position="1"/>
        <end position="82"/>
    </location>
</feature>
<feature type="transmembrane region" description="Helical; Signal-anchor for type II membrane protein" evidence="2">
    <location>
        <begin position="83"/>
        <end position="103"/>
    </location>
</feature>
<feature type="topological domain" description="Extracellular" evidence="10">
    <location>
        <begin position="104"/>
        <end position="1378"/>
    </location>
</feature>
<feature type="domain" description="G8" evidence="4">
    <location>
        <begin position="121"/>
        <end position="247"/>
    </location>
</feature>
<feature type="domain" description="GG-type lectin 1" evidence="5">
    <location>
        <begin position="257"/>
        <end position="414"/>
    </location>
</feature>
<feature type="repeat" description="PbH1 1">
    <location>
        <begin position="672"/>
        <end position="694"/>
    </location>
</feature>
<feature type="repeat" description="PbH1 2">
    <location>
        <begin position="714"/>
        <end position="736"/>
    </location>
</feature>
<feature type="domain" description="GG-type lectin 2" evidence="5">
    <location>
        <begin position="1203"/>
        <end position="1363"/>
    </location>
</feature>
<feature type="region of interest" description="Disordered" evidence="6">
    <location>
        <begin position="1"/>
        <end position="77"/>
    </location>
</feature>
<feature type="compositionally biased region" description="Pro residues" evidence="6">
    <location>
        <begin position="36"/>
        <end position="58"/>
    </location>
</feature>
<feature type="glycosylation site" description="N-linked (GlcNAc...) asparagine" evidence="3">
    <location>
        <position position="171"/>
    </location>
</feature>
<feature type="glycosylation site" description="N-linked (GlcNAc...) asparagine" evidence="3">
    <location>
        <position position="264"/>
    </location>
</feature>
<feature type="glycosylation site" description="N-linked (GlcNAc...) asparagine" evidence="3">
    <location>
        <position position="360"/>
    </location>
</feature>
<feature type="glycosylation site" description="N-linked (GlcNAc...) asparagine" evidence="3">
    <location>
        <position position="527"/>
    </location>
</feature>
<feature type="glycosylation site" description="N-linked (GlcNAc...) asparagine" evidence="3">
    <location>
        <position position="639"/>
    </location>
</feature>
<feature type="glycosylation site" description="N-linked (GlcNAc...) asparagine" evidence="3">
    <location>
        <position position="696"/>
    </location>
</feature>
<feature type="glycosylation site" description="N-linked (GlcNAc...) asparagine" evidence="3">
    <location>
        <position position="742"/>
    </location>
</feature>
<feature type="glycosylation site" description="N-linked (GlcNAc...) asparagine" evidence="3">
    <location>
        <position position="854"/>
    </location>
</feature>
<feature type="glycosylation site" description="N-linked (GlcNAc...) asparagine" evidence="3">
    <location>
        <position position="905"/>
    </location>
</feature>
<feature type="glycosylation site" description="N-linked (GlcNAc...) asparagine" evidence="3">
    <location>
        <position position="996"/>
    </location>
</feature>
<feature type="glycosylation site" description="N-linked (GlcNAc...) asparagine" evidence="3">
    <location>
        <position position="1069"/>
    </location>
</feature>
<feature type="glycosylation site" description="N-linked (GlcNAc...) asparagine" evidence="3">
    <location>
        <position position="1160"/>
    </location>
</feature>
<feature type="glycosylation site" description="N-linked (GlcNAc...) asparagine" evidence="3">
    <location>
        <position position="1221"/>
    </location>
</feature>
<feature type="mutagenesis site" description="In hu4800; defects in angiogenesis." evidence="10">
    <original>V</original>
    <variation>E</variation>
    <location>
        <position position="426"/>
    </location>
</feature>
<feature type="mutagenesis site" description="Defects in angiogenesis." evidence="10">
    <original>W</original>
    <variation>A</variation>
    <location>
        <position position="429"/>
    </location>
</feature>
<feature type="mutagenesis site" description="Defects in angiogenesis." evidence="10">
    <original>R</original>
    <variation>A</variation>
    <location>
        <position position="434"/>
    </location>
</feature>
<feature type="mutagenesis site" description="Defects in angiogenesis." evidence="10">
    <original>F</original>
    <variation>A</variation>
    <location>
        <position position="608"/>
    </location>
</feature>
<reference key="1">
    <citation type="journal article" date="2013" name="Nature">
        <title>The zebrafish reference genome sequence and its relationship to the human genome.</title>
        <authorList>
            <person name="Howe K."/>
            <person name="Clark M.D."/>
            <person name="Torroja C.F."/>
            <person name="Torrance J."/>
            <person name="Berthelot C."/>
            <person name="Muffato M."/>
            <person name="Collins J.E."/>
            <person name="Humphray S."/>
            <person name="McLaren K."/>
            <person name="Matthews L."/>
            <person name="McLaren S."/>
            <person name="Sealy I."/>
            <person name="Caccamo M."/>
            <person name="Churcher C."/>
            <person name="Scott C."/>
            <person name="Barrett J.C."/>
            <person name="Koch R."/>
            <person name="Rauch G.J."/>
            <person name="White S."/>
            <person name="Chow W."/>
            <person name="Kilian B."/>
            <person name="Quintais L.T."/>
            <person name="Guerra-Assuncao J.A."/>
            <person name="Zhou Y."/>
            <person name="Gu Y."/>
            <person name="Yen J."/>
            <person name="Vogel J.H."/>
            <person name="Eyre T."/>
            <person name="Redmond S."/>
            <person name="Banerjee R."/>
            <person name="Chi J."/>
            <person name="Fu B."/>
            <person name="Langley E."/>
            <person name="Maguire S.F."/>
            <person name="Laird G.K."/>
            <person name="Lloyd D."/>
            <person name="Kenyon E."/>
            <person name="Donaldson S."/>
            <person name="Sehra H."/>
            <person name="Almeida-King J."/>
            <person name="Loveland J."/>
            <person name="Trevanion S."/>
            <person name="Jones M."/>
            <person name="Quail M."/>
            <person name="Willey D."/>
            <person name="Hunt A."/>
            <person name="Burton J."/>
            <person name="Sims S."/>
            <person name="McLay K."/>
            <person name="Plumb B."/>
            <person name="Davis J."/>
            <person name="Clee C."/>
            <person name="Oliver K."/>
            <person name="Clark R."/>
            <person name="Riddle C."/>
            <person name="Elliot D."/>
            <person name="Threadgold G."/>
            <person name="Harden G."/>
            <person name="Ware D."/>
            <person name="Begum S."/>
            <person name="Mortimore B."/>
            <person name="Kerry G."/>
            <person name="Heath P."/>
            <person name="Phillimore B."/>
            <person name="Tracey A."/>
            <person name="Corby N."/>
            <person name="Dunn M."/>
            <person name="Johnson C."/>
            <person name="Wood J."/>
            <person name="Clark S."/>
            <person name="Pelan S."/>
            <person name="Griffiths G."/>
            <person name="Smith M."/>
            <person name="Glithero R."/>
            <person name="Howden P."/>
            <person name="Barker N."/>
            <person name="Lloyd C."/>
            <person name="Stevens C."/>
            <person name="Harley J."/>
            <person name="Holt K."/>
            <person name="Panagiotidis G."/>
            <person name="Lovell J."/>
            <person name="Beasley H."/>
            <person name="Henderson C."/>
            <person name="Gordon D."/>
            <person name="Auger K."/>
            <person name="Wright D."/>
            <person name="Collins J."/>
            <person name="Raisen C."/>
            <person name="Dyer L."/>
            <person name="Leung K."/>
            <person name="Robertson L."/>
            <person name="Ambridge K."/>
            <person name="Leongamornlert D."/>
            <person name="McGuire S."/>
            <person name="Gilderthorp R."/>
            <person name="Griffiths C."/>
            <person name="Manthravadi D."/>
            <person name="Nichol S."/>
            <person name="Barker G."/>
            <person name="Whitehead S."/>
            <person name="Kay M."/>
            <person name="Brown J."/>
            <person name="Murnane C."/>
            <person name="Gray E."/>
            <person name="Humphries M."/>
            <person name="Sycamore N."/>
            <person name="Barker D."/>
            <person name="Saunders D."/>
            <person name="Wallis J."/>
            <person name="Babbage A."/>
            <person name="Hammond S."/>
            <person name="Mashreghi-Mohammadi M."/>
            <person name="Barr L."/>
            <person name="Martin S."/>
            <person name="Wray P."/>
            <person name="Ellington A."/>
            <person name="Matthews N."/>
            <person name="Ellwood M."/>
            <person name="Woodmansey R."/>
            <person name="Clark G."/>
            <person name="Cooper J."/>
            <person name="Tromans A."/>
            <person name="Grafham D."/>
            <person name="Skuce C."/>
            <person name="Pandian R."/>
            <person name="Andrews R."/>
            <person name="Harrison E."/>
            <person name="Kimberley A."/>
            <person name="Garnett J."/>
            <person name="Fosker N."/>
            <person name="Hall R."/>
            <person name="Garner P."/>
            <person name="Kelly D."/>
            <person name="Bird C."/>
            <person name="Palmer S."/>
            <person name="Gehring I."/>
            <person name="Berger A."/>
            <person name="Dooley C.M."/>
            <person name="Ersan-Urun Z."/>
            <person name="Eser C."/>
            <person name="Geiger H."/>
            <person name="Geisler M."/>
            <person name="Karotki L."/>
            <person name="Kirn A."/>
            <person name="Konantz J."/>
            <person name="Konantz M."/>
            <person name="Oberlander M."/>
            <person name="Rudolph-Geiger S."/>
            <person name="Teucke M."/>
            <person name="Lanz C."/>
            <person name="Raddatz G."/>
            <person name="Osoegawa K."/>
            <person name="Zhu B."/>
            <person name="Rapp A."/>
            <person name="Widaa S."/>
            <person name="Langford C."/>
            <person name="Yang F."/>
            <person name="Schuster S.C."/>
            <person name="Carter N.P."/>
            <person name="Harrow J."/>
            <person name="Ning Z."/>
            <person name="Herrero J."/>
            <person name="Searle S.M."/>
            <person name="Enright A."/>
            <person name="Geisler R."/>
            <person name="Plasterk R.H."/>
            <person name="Lee C."/>
            <person name="Westerfield M."/>
            <person name="de Jong P.J."/>
            <person name="Zon L.I."/>
            <person name="Postlethwait J.H."/>
            <person name="Nusslein-Volhard C."/>
            <person name="Hubbard T.J."/>
            <person name="Roest Crollius H."/>
            <person name="Rogers J."/>
            <person name="Stemple D.L."/>
        </authorList>
    </citation>
    <scope>NUCLEOTIDE SEQUENCE [LARGE SCALE GENOMIC DNA]</scope>
    <source>
        <strain>Tuebingen</strain>
    </source>
</reference>
<reference key="2">
    <citation type="journal article" date="2011" name="Development">
        <title>Transmembrane protein 2 (Tmem2) is required to regionally restrict atrioventricular canal boundary and endocardial cushion development.</title>
        <authorList>
            <person name="Smith K.A."/>
            <person name="Lagendijk A.K."/>
            <person name="Courtney A.D."/>
            <person name="Chen H."/>
            <person name="Paterson S."/>
            <person name="Hogan B.M."/>
            <person name="Wicking C."/>
            <person name="Bakkers J."/>
        </authorList>
    </citation>
    <scope>FUNCTION</scope>
    <scope>DISRUPTION PHENOTYPE</scope>
    <scope>DEVELOPMENTAL STAGE</scope>
</reference>
<reference key="3">
    <citation type="journal article" date="2011" name="Development">
        <title>The novel transmembrane protein Tmem2 is essential for coordination of myocardial and endocardial morphogenesis.</title>
        <authorList>
            <person name="Totong R."/>
            <person name="Schell T."/>
            <person name="Lescroart F."/>
            <person name="Ryckebusch L."/>
            <person name="Lin Y.F."/>
            <person name="Zygmunt T."/>
            <person name="Herwig L."/>
            <person name="Krudewig A."/>
            <person name="Gershoony D."/>
            <person name="Belting H.G."/>
            <person name="Affolter M."/>
            <person name="Torres-Vazquez J."/>
            <person name="Yelon D."/>
        </authorList>
    </citation>
    <scope>FUNCTION</scope>
    <scope>DISRUPTION PHENOTYPE</scope>
    <scope>DEVELOPMENTAL STAGE</scope>
</reference>
<reference key="4">
    <citation type="journal article" date="2016" name="Development">
        <title>Tmem2 regulates cell-matrix interactions that are essential for muscle fiber attachment.</title>
        <authorList>
            <person name="Ryckebuesch L."/>
            <person name="Hernandez L."/>
            <person name="Wang C."/>
            <person name="Phan J."/>
            <person name="Yelon D."/>
        </authorList>
    </citation>
    <scope>FUNCTION</scope>
    <scope>DISRUPTION PHENOTYPE</scope>
</reference>
<reference key="5">
    <citation type="journal article" date="2017" name="Dev. Cell">
        <title>Tmem2 regulates embryonic Vegf signaling by controlling hyaluronic acid turnover.</title>
        <authorList>
            <person name="De Angelis J.E."/>
            <person name="Lagendijk A.K."/>
            <person name="Chen H."/>
            <person name="Tromp A."/>
            <person name="Bower N.I."/>
            <person name="Tunny K.A."/>
            <person name="Brooks A.J."/>
            <person name="Bakkers J."/>
            <person name="Francois M."/>
            <person name="Yap A.S."/>
            <person name="Simons C."/>
            <person name="Wicking C."/>
            <person name="Hogan B.M."/>
            <person name="Smith K.A."/>
        </authorList>
    </citation>
    <scope>FUNCTION</scope>
    <scope>CATALYTIC ACTIVITY</scope>
    <scope>SUBCELLULAR LOCATION</scope>
    <scope>TOPOLOGY</scope>
    <scope>DISRUPTION PHENOTYPE</scope>
    <scope>MUTAGENESIS OF VAL-426; TRP-429; ARG-434 AND PHE-608</scope>
</reference>
<name>CEIP2_DANRE</name>
<protein>
    <recommendedName>
        <fullName evidence="11 12">Cell surface hyaluronidase</fullName>
        <ecNumber evidence="15">3.2.1.35</ecNumber>
    </recommendedName>
    <alternativeName>
        <fullName evidence="1">Cell migration-inducing hyaluronidase 2</fullName>
    </alternativeName>
    <alternativeName>
        <fullName evidence="12">Protein frozen ventricle</fullName>
    </alternativeName>
    <alternativeName>
        <fullName evidence="11">Protein wickham</fullName>
    </alternativeName>
    <alternativeName>
        <fullName evidence="11 12">Transmembrane protein 2</fullName>
    </alternativeName>
</protein>
<keyword id="KW-0037">Angiogenesis</keyword>
<keyword id="KW-1003">Cell membrane</keyword>
<keyword id="KW-0217">Developmental protein</keyword>
<keyword id="KW-0325">Glycoprotein</keyword>
<keyword id="KW-0326">Glycosidase</keyword>
<keyword id="KW-0378">Hydrolase</keyword>
<keyword id="KW-0430">Lectin</keyword>
<keyword id="KW-0472">Membrane</keyword>
<keyword id="KW-1185">Reference proteome</keyword>
<keyword id="KW-0677">Repeat</keyword>
<keyword id="KW-0735">Signal-anchor</keyword>
<keyword id="KW-0812">Transmembrane</keyword>
<keyword id="KW-1133">Transmembrane helix</keyword>
<accession>A3KPQ7</accession>
<comment type="function">
    <text evidence="1 7 8 9 10">Cell surface hyaluronidase that mediates the initial cleavage of extracellular high-molecular-weight hyaluronan into intermediate-size hyaluronan (PubMed:28118600). Acts as a regulator of angiogenesis in embryos by mediating degradation of extracellular hyaluronan, thereby promoting VEGF signaling (PubMed:28118600). Acts as a regulator of heart development during myocardial and endocardial morphogenesis: involved in the looping stage of heart morphogenesis (PubMed:21896629). Stimulates migration of endocardial cells and increases both myocardial and endocardial fusion (PubMed:21896630). Involved in the restriction of endocardial cushions (ECs) formation to the atrioventricular canal (AVC) (PubMed:21896630). Also required for muscle fiber attachment (PubMed:27471259). Is very specific to hyaluronan; not able to cleave chondroitin sulfate or dermatan sulfate (By similarity).</text>
</comment>
<comment type="catalytic activity">
    <reaction evidence="15">
        <text>Random hydrolysis of (1-&gt;4)-linkages between N-acetyl-beta-D-glucosamine and D-glucuronate residues in hyaluronate.</text>
        <dbReference type="EC" id="3.2.1.35"/>
    </reaction>
</comment>
<comment type="cofactor">
    <cofactor evidence="1">
        <name>Ca(2+)</name>
        <dbReference type="ChEBI" id="CHEBI:29108"/>
    </cofactor>
</comment>
<comment type="subcellular location">
    <subcellularLocation>
        <location evidence="10">Cell membrane</location>
        <topology evidence="10">Single-pass type II membrane protein</topology>
    </subcellularLocation>
</comment>
<comment type="developmental stage">
    <text evidence="7 8">Expressed both maternally and zygotically. Expressed at the 2 cell stage. Ubiquitously expressed at the 22-somite stage. Expressed in the brain and head mesenchyme, otic vesicles, fin buds, caudal vein and the heart (both myocardial and endocardial cells) at 24 hours post fertilization (hpf).</text>
</comment>
<comment type="disruption phenotype">
    <text evidence="7 8 9 10">Embryos show defects in heart morphogenesis: while heart development is normal at the linear heart tube stage, cardiac looping is lost at later developmental stages (PubMed:21896629). Defects during the endocardial morphogenesis, characterized by the formation of ectopic atrioventricular canal in the ventricular myocardium and endocardium (PubMed:21896630). Maternal-zygotic mutants also display muscle fiber detachment, associated with impaired laminin organization and ineffective fibronectin degradation at the myotendinous junction (PubMed:27471259). Defects in angiogenesis, characterized by embryos with no venous sprouting (PubMed:28118600).</text>
</comment>
<comment type="similarity">
    <text evidence="14">Belongs to the CEMIP family.</text>
</comment>
<organism>
    <name type="scientific">Danio rerio</name>
    <name type="common">Zebrafish</name>
    <name type="synonym">Brachydanio rerio</name>
    <dbReference type="NCBI Taxonomy" id="7955"/>
    <lineage>
        <taxon>Eukaryota</taxon>
        <taxon>Metazoa</taxon>
        <taxon>Chordata</taxon>
        <taxon>Craniata</taxon>
        <taxon>Vertebrata</taxon>
        <taxon>Euteleostomi</taxon>
        <taxon>Actinopterygii</taxon>
        <taxon>Neopterygii</taxon>
        <taxon>Teleostei</taxon>
        <taxon>Ostariophysi</taxon>
        <taxon>Cypriniformes</taxon>
        <taxon>Danionidae</taxon>
        <taxon>Danioninae</taxon>
        <taxon>Danio</taxon>
    </lineage>
</organism>